<keyword id="KW-0414">Isoprene biosynthesis</keyword>
<keyword id="KW-0460">Magnesium</keyword>
<keyword id="KW-0479">Metal-binding</keyword>
<keyword id="KW-1185">Reference proteome</keyword>
<keyword id="KW-0784">Thiamine biosynthesis</keyword>
<keyword id="KW-0786">Thiamine pyrophosphate</keyword>
<keyword id="KW-0808">Transferase</keyword>
<dbReference type="EC" id="2.2.1.7" evidence="1"/>
<dbReference type="EMBL" id="AL646052">
    <property type="protein sequence ID" value="CAD15928.1"/>
    <property type="molecule type" value="Genomic_DNA"/>
</dbReference>
<dbReference type="RefSeq" id="WP_011002149.1">
    <property type="nucleotide sequence ID" value="NC_003295.1"/>
</dbReference>
<dbReference type="SMR" id="Q8XX95"/>
<dbReference type="STRING" id="267608.RSc2221"/>
<dbReference type="EnsemblBacteria" id="CAD15928">
    <property type="protein sequence ID" value="CAD15928"/>
    <property type="gene ID" value="RSc2221"/>
</dbReference>
<dbReference type="KEGG" id="rso:RSc2221"/>
<dbReference type="eggNOG" id="COG1154">
    <property type="taxonomic scope" value="Bacteria"/>
</dbReference>
<dbReference type="HOGENOM" id="CLU_009227_1_4_4"/>
<dbReference type="UniPathway" id="UPA00064">
    <property type="reaction ID" value="UER00091"/>
</dbReference>
<dbReference type="Proteomes" id="UP000001436">
    <property type="component" value="Chromosome"/>
</dbReference>
<dbReference type="GO" id="GO:0005829">
    <property type="term" value="C:cytosol"/>
    <property type="evidence" value="ECO:0007669"/>
    <property type="project" value="TreeGrafter"/>
</dbReference>
<dbReference type="GO" id="GO:0008661">
    <property type="term" value="F:1-deoxy-D-xylulose-5-phosphate synthase activity"/>
    <property type="evidence" value="ECO:0007669"/>
    <property type="project" value="UniProtKB-UniRule"/>
</dbReference>
<dbReference type="GO" id="GO:0000287">
    <property type="term" value="F:magnesium ion binding"/>
    <property type="evidence" value="ECO:0007669"/>
    <property type="project" value="UniProtKB-UniRule"/>
</dbReference>
<dbReference type="GO" id="GO:0030976">
    <property type="term" value="F:thiamine pyrophosphate binding"/>
    <property type="evidence" value="ECO:0007669"/>
    <property type="project" value="UniProtKB-UniRule"/>
</dbReference>
<dbReference type="GO" id="GO:0052865">
    <property type="term" value="P:1-deoxy-D-xylulose 5-phosphate biosynthetic process"/>
    <property type="evidence" value="ECO:0007669"/>
    <property type="project" value="UniProtKB-UniPathway"/>
</dbReference>
<dbReference type="GO" id="GO:0019288">
    <property type="term" value="P:isopentenyl diphosphate biosynthetic process, methylerythritol 4-phosphate pathway"/>
    <property type="evidence" value="ECO:0007669"/>
    <property type="project" value="TreeGrafter"/>
</dbReference>
<dbReference type="GO" id="GO:0016114">
    <property type="term" value="P:terpenoid biosynthetic process"/>
    <property type="evidence" value="ECO:0007669"/>
    <property type="project" value="UniProtKB-UniRule"/>
</dbReference>
<dbReference type="GO" id="GO:0009228">
    <property type="term" value="P:thiamine biosynthetic process"/>
    <property type="evidence" value="ECO:0007669"/>
    <property type="project" value="UniProtKB-UniRule"/>
</dbReference>
<dbReference type="CDD" id="cd02007">
    <property type="entry name" value="TPP_DXS"/>
    <property type="match status" value="1"/>
</dbReference>
<dbReference type="CDD" id="cd07033">
    <property type="entry name" value="TPP_PYR_DXS_TK_like"/>
    <property type="match status" value="1"/>
</dbReference>
<dbReference type="FunFam" id="3.40.50.920:FF:000002">
    <property type="entry name" value="1-deoxy-D-xylulose-5-phosphate synthase"/>
    <property type="match status" value="1"/>
</dbReference>
<dbReference type="FunFam" id="3.40.50.970:FF:000005">
    <property type="entry name" value="1-deoxy-D-xylulose-5-phosphate synthase"/>
    <property type="match status" value="1"/>
</dbReference>
<dbReference type="Gene3D" id="3.40.50.920">
    <property type="match status" value="1"/>
</dbReference>
<dbReference type="Gene3D" id="3.40.50.970">
    <property type="match status" value="2"/>
</dbReference>
<dbReference type="HAMAP" id="MF_00315">
    <property type="entry name" value="DXP_synth"/>
    <property type="match status" value="1"/>
</dbReference>
<dbReference type="InterPro" id="IPR005477">
    <property type="entry name" value="Dxylulose-5-P_synthase"/>
</dbReference>
<dbReference type="InterPro" id="IPR029061">
    <property type="entry name" value="THDP-binding"/>
</dbReference>
<dbReference type="InterPro" id="IPR009014">
    <property type="entry name" value="Transketo_C/PFOR_II"/>
</dbReference>
<dbReference type="InterPro" id="IPR005475">
    <property type="entry name" value="Transketolase-like_Pyr-bd"/>
</dbReference>
<dbReference type="InterPro" id="IPR020826">
    <property type="entry name" value="Transketolase_BS"/>
</dbReference>
<dbReference type="InterPro" id="IPR033248">
    <property type="entry name" value="Transketolase_C"/>
</dbReference>
<dbReference type="InterPro" id="IPR049557">
    <property type="entry name" value="Transketolase_CS"/>
</dbReference>
<dbReference type="NCBIfam" id="TIGR00204">
    <property type="entry name" value="dxs"/>
    <property type="match status" value="1"/>
</dbReference>
<dbReference type="NCBIfam" id="NF003933">
    <property type="entry name" value="PRK05444.2-2"/>
    <property type="match status" value="1"/>
</dbReference>
<dbReference type="PANTHER" id="PTHR43322">
    <property type="entry name" value="1-D-DEOXYXYLULOSE 5-PHOSPHATE SYNTHASE-RELATED"/>
    <property type="match status" value="1"/>
</dbReference>
<dbReference type="PANTHER" id="PTHR43322:SF5">
    <property type="entry name" value="1-DEOXY-D-XYLULOSE-5-PHOSPHATE SYNTHASE, CHLOROPLASTIC"/>
    <property type="match status" value="1"/>
</dbReference>
<dbReference type="Pfam" id="PF13292">
    <property type="entry name" value="DXP_synthase_N"/>
    <property type="match status" value="1"/>
</dbReference>
<dbReference type="Pfam" id="PF02779">
    <property type="entry name" value="Transket_pyr"/>
    <property type="match status" value="1"/>
</dbReference>
<dbReference type="Pfam" id="PF02780">
    <property type="entry name" value="Transketolase_C"/>
    <property type="match status" value="1"/>
</dbReference>
<dbReference type="SMART" id="SM00861">
    <property type="entry name" value="Transket_pyr"/>
    <property type="match status" value="1"/>
</dbReference>
<dbReference type="SUPFAM" id="SSF52518">
    <property type="entry name" value="Thiamin diphosphate-binding fold (THDP-binding)"/>
    <property type="match status" value="2"/>
</dbReference>
<dbReference type="SUPFAM" id="SSF52922">
    <property type="entry name" value="TK C-terminal domain-like"/>
    <property type="match status" value="1"/>
</dbReference>
<dbReference type="PROSITE" id="PS00801">
    <property type="entry name" value="TRANSKETOLASE_1"/>
    <property type="match status" value="1"/>
</dbReference>
<dbReference type="PROSITE" id="PS00802">
    <property type="entry name" value="TRANSKETOLASE_2"/>
    <property type="match status" value="1"/>
</dbReference>
<protein>
    <recommendedName>
        <fullName evidence="1">1-deoxy-D-xylulose-5-phosphate synthase</fullName>
        <ecNumber evidence="1">2.2.1.7</ecNumber>
    </recommendedName>
    <alternativeName>
        <fullName evidence="1">1-deoxyxylulose-5-phosphate synthase</fullName>
        <shortName evidence="1">DXP synthase</shortName>
        <shortName evidence="1">DXPS</shortName>
    </alternativeName>
</protein>
<organism>
    <name type="scientific">Ralstonia nicotianae (strain ATCC BAA-1114 / GMI1000)</name>
    <name type="common">Ralstonia solanacearum</name>
    <dbReference type="NCBI Taxonomy" id="267608"/>
    <lineage>
        <taxon>Bacteria</taxon>
        <taxon>Pseudomonadati</taxon>
        <taxon>Pseudomonadota</taxon>
        <taxon>Betaproteobacteria</taxon>
        <taxon>Burkholderiales</taxon>
        <taxon>Burkholderiaceae</taxon>
        <taxon>Ralstonia</taxon>
        <taxon>Ralstonia solanacearum species complex</taxon>
    </lineage>
</organism>
<sequence length="636" mass="68300">MTYELLNTIDAPAELRRLDRRQLGTLADELRAFVLESVAQTGGHLSSNLGTVELTIALHYVFNTPDDRIVWDVGHQSYPHKILTGRREQMATLRQLDGISGFPRRSESPYDTFGTAHSSTSISAALGMALGAKTQGENRVAIAVIGDGAMSAGMAFEAMNNAGVYRNLPLVVVLNDNDMSISPPVGALNRYLARLMSGQFYAATKKGVEKLLSVAPPVLEFAKRFEEHAKGMLVPATMFEEFGFNYIGPIDGHDLESLVPTLQNIRQRALEGGRPQFLHVVTKKGQGYKLAEADPILYHGPGKFNPQEGIKPAARPAKVSYTQVFGQWLCDMAAADKRLVGITPAMREGSGMVEFEQRFPDRYYDVGIAEQHAVTFAGGLACEGLKPVVAIYSTFLQRGYDQLIHDVALQNLPVVFALDRAGLVGADGATHAGAYDMAYLRCIPNMMVMAPADENECRQLLSTAFAQDCPTAVRYPRGAGTGVVVQPTLEPLPVGKAEVRRASTAPAGQRVVILAFGSMVAPAAAAAERLDATVVNMRFVKPLDAACVLEMARTHDYVVTVEEGCVMGGAGSACLEALAAAGVATPVLQLGLPDRFVDHGDHAALLALCGLDANGILASIRERFAVQPRAVQPRVA</sequence>
<comment type="function">
    <text evidence="1">Catalyzes the acyloin condensation reaction between C atoms 2 and 3 of pyruvate and glyceraldehyde 3-phosphate to yield 1-deoxy-D-xylulose-5-phosphate (DXP).</text>
</comment>
<comment type="catalytic activity">
    <reaction evidence="1">
        <text>D-glyceraldehyde 3-phosphate + pyruvate + H(+) = 1-deoxy-D-xylulose 5-phosphate + CO2</text>
        <dbReference type="Rhea" id="RHEA:12605"/>
        <dbReference type="ChEBI" id="CHEBI:15361"/>
        <dbReference type="ChEBI" id="CHEBI:15378"/>
        <dbReference type="ChEBI" id="CHEBI:16526"/>
        <dbReference type="ChEBI" id="CHEBI:57792"/>
        <dbReference type="ChEBI" id="CHEBI:59776"/>
        <dbReference type="EC" id="2.2.1.7"/>
    </reaction>
</comment>
<comment type="cofactor">
    <cofactor evidence="1">
        <name>Mg(2+)</name>
        <dbReference type="ChEBI" id="CHEBI:18420"/>
    </cofactor>
    <text evidence="1">Binds 1 Mg(2+) ion per subunit.</text>
</comment>
<comment type="cofactor">
    <cofactor evidence="1">
        <name>thiamine diphosphate</name>
        <dbReference type="ChEBI" id="CHEBI:58937"/>
    </cofactor>
    <text evidence="1">Binds 1 thiamine pyrophosphate per subunit.</text>
</comment>
<comment type="pathway">
    <text evidence="1">Metabolic intermediate biosynthesis; 1-deoxy-D-xylulose 5-phosphate biosynthesis; 1-deoxy-D-xylulose 5-phosphate from D-glyceraldehyde 3-phosphate and pyruvate: step 1/1.</text>
</comment>
<comment type="subunit">
    <text evidence="1">Homodimer.</text>
</comment>
<comment type="similarity">
    <text evidence="1">Belongs to the transketolase family. DXPS subfamily.</text>
</comment>
<name>DXS_RALN1</name>
<proteinExistence type="inferred from homology"/>
<accession>Q8XX95</accession>
<evidence type="ECO:0000255" key="1">
    <source>
        <dbReference type="HAMAP-Rule" id="MF_00315"/>
    </source>
</evidence>
<gene>
    <name evidence="1" type="primary">dxs</name>
    <name type="ordered locus">RSc2221</name>
    <name type="ORF">RS01378</name>
</gene>
<feature type="chain" id="PRO_0000189145" description="1-deoxy-D-xylulose-5-phosphate synthase">
    <location>
        <begin position="1"/>
        <end position="636"/>
    </location>
</feature>
<feature type="binding site" evidence="1">
    <location>
        <position position="75"/>
    </location>
    <ligand>
        <name>thiamine diphosphate</name>
        <dbReference type="ChEBI" id="CHEBI:58937"/>
    </ligand>
</feature>
<feature type="binding site" evidence="1">
    <location>
        <begin position="116"/>
        <end position="118"/>
    </location>
    <ligand>
        <name>thiamine diphosphate</name>
        <dbReference type="ChEBI" id="CHEBI:58937"/>
    </ligand>
</feature>
<feature type="binding site" evidence="1">
    <location>
        <position position="147"/>
    </location>
    <ligand>
        <name>Mg(2+)</name>
        <dbReference type="ChEBI" id="CHEBI:18420"/>
    </ligand>
</feature>
<feature type="binding site" evidence="1">
    <location>
        <begin position="148"/>
        <end position="149"/>
    </location>
    <ligand>
        <name>thiamine diphosphate</name>
        <dbReference type="ChEBI" id="CHEBI:58937"/>
    </ligand>
</feature>
<feature type="binding site" evidence="1">
    <location>
        <position position="177"/>
    </location>
    <ligand>
        <name>Mg(2+)</name>
        <dbReference type="ChEBI" id="CHEBI:18420"/>
    </ligand>
</feature>
<feature type="binding site" evidence="1">
    <location>
        <position position="177"/>
    </location>
    <ligand>
        <name>thiamine diphosphate</name>
        <dbReference type="ChEBI" id="CHEBI:58937"/>
    </ligand>
</feature>
<feature type="binding site" evidence="1">
    <location>
        <position position="288"/>
    </location>
    <ligand>
        <name>thiamine diphosphate</name>
        <dbReference type="ChEBI" id="CHEBI:58937"/>
    </ligand>
</feature>
<feature type="binding site" evidence="1">
    <location>
        <position position="370"/>
    </location>
    <ligand>
        <name>thiamine diphosphate</name>
        <dbReference type="ChEBI" id="CHEBI:58937"/>
    </ligand>
</feature>
<reference key="1">
    <citation type="journal article" date="2002" name="Nature">
        <title>Genome sequence of the plant pathogen Ralstonia solanacearum.</title>
        <authorList>
            <person name="Salanoubat M."/>
            <person name="Genin S."/>
            <person name="Artiguenave F."/>
            <person name="Gouzy J."/>
            <person name="Mangenot S."/>
            <person name="Arlat M."/>
            <person name="Billault A."/>
            <person name="Brottier P."/>
            <person name="Camus J.-C."/>
            <person name="Cattolico L."/>
            <person name="Chandler M."/>
            <person name="Choisne N."/>
            <person name="Claudel-Renard C."/>
            <person name="Cunnac S."/>
            <person name="Demange N."/>
            <person name="Gaspin C."/>
            <person name="Lavie M."/>
            <person name="Moisan A."/>
            <person name="Robert C."/>
            <person name="Saurin W."/>
            <person name="Schiex T."/>
            <person name="Siguier P."/>
            <person name="Thebault P."/>
            <person name="Whalen M."/>
            <person name="Wincker P."/>
            <person name="Levy M."/>
            <person name="Weissenbach J."/>
            <person name="Boucher C.A."/>
        </authorList>
    </citation>
    <scope>NUCLEOTIDE SEQUENCE [LARGE SCALE GENOMIC DNA]</scope>
    <source>
        <strain>ATCC BAA-1114 / GMI1000</strain>
    </source>
</reference>